<organism>
    <name type="scientific">Saccharolobus solfataricus (strain ATCC 35092 / DSM 1617 / JCM 11322 / P2)</name>
    <name type="common">Sulfolobus solfataricus</name>
    <dbReference type="NCBI Taxonomy" id="273057"/>
    <lineage>
        <taxon>Archaea</taxon>
        <taxon>Thermoproteota</taxon>
        <taxon>Thermoprotei</taxon>
        <taxon>Sulfolobales</taxon>
        <taxon>Sulfolobaceae</taxon>
        <taxon>Saccharolobus</taxon>
    </lineage>
</organism>
<gene>
    <name type="primary">hisI</name>
    <name type="ordered locus">SSO6227</name>
</gene>
<evidence type="ECO:0000250" key="1"/>
<evidence type="ECO:0000305" key="2"/>
<protein>
    <recommendedName>
        <fullName>Phosphoribosyl-AMP cyclohydrolase</fullName>
        <shortName>PRA-CH</shortName>
        <ecNumber>3.5.4.19</ecNumber>
    </recommendedName>
</protein>
<keyword id="KW-0028">Amino-acid biosynthesis</keyword>
<keyword id="KW-0963">Cytoplasm</keyword>
<keyword id="KW-0368">Histidine biosynthesis</keyword>
<keyword id="KW-0378">Hydrolase</keyword>
<keyword id="KW-0460">Magnesium</keyword>
<keyword id="KW-0479">Metal-binding</keyword>
<keyword id="KW-1185">Reference proteome</keyword>
<keyword id="KW-0862">Zinc</keyword>
<dbReference type="EC" id="3.5.4.19"/>
<dbReference type="EMBL" id="U82227">
    <property type="protein sequence ID" value="AAB63026.1"/>
    <property type="molecule type" value="Genomic_DNA"/>
</dbReference>
<dbReference type="EMBL" id="AE006641">
    <property type="protein sequence ID" value="AAK40912.1"/>
    <property type="molecule type" value="Genomic_DNA"/>
</dbReference>
<dbReference type="PIR" id="A90207">
    <property type="entry name" value="A90207"/>
</dbReference>
<dbReference type="SMR" id="O33778"/>
<dbReference type="FunCoup" id="O33778">
    <property type="interactions" value="89"/>
</dbReference>
<dbReference type="STRING" id="273057.SSO6227"/>
<dbReference type="PaxDb" id="273057-SSO6227"/>
<dbReference type="EnsemblBacteria" id="AAK40912">
    <property type="protein sequence ID" value="AAK40912"/>
    <property type="gene ID" value="SSO6227"/>
</dbReference>
<dbReference type="KEGG" id="sso:SSO6227"/>
<dbReference type="PATRIC" id="fig|273057.12.peg.608"/>
<dbReference type="eggNOG" id="arCOG02676">
    <property type="taxonomic scope" value="Archaea"/>
</dbReference>
<dbReference type="HOGENOM" id="CLU_048577_5_3_2"/>
<dbReference type="InParanoid" id="O33778"/>
<dbReference type="PhylomeDB" id="O33778"/>
<dbReference type="UniPathway" id="UPA00031">
    <property type="reaction ID" value="UER00008"/>
</dbReference>
<dbReference type="Proteomes" id="UP000001974">
    <property type="component" value="Chromosome"/>
</dbReference>
<dbReference type="GO" id="GO:0005737">
    <property type="term" value="C:cytoplasm"/>
    <property type="evidence" value="ECO:0007669"/>
    <property type="project" value="UniProtKB-SubCell"/>
</dbReference>
<dbReference type="GO" id="GO:0046872">
    <property type="term" value="F:metal ion binding"/>
    <property type="evidence" value="ECO:0007669"/>
    <property type="project" value="UniProtKB-KW"/>
</dbReference>
<dbReference type="GO" id="GO:0004635">
    <property type="term" value="F:phosphoribosyl-AMP cyclohydrolase activity"/>
    <property type="evidence" value="ECO:0007669"/>
    <property type="project" value="UniProtKB-EC"/>
</dbReference>
<dbReference type="GO" id="GO:0000105">
    <property type="term" value="P:L-histidine biosynthetic process"/>
    <property type="evidence" value="ECO:0007669"/>
    <property type="project" value="UniProtKB-UniPathway"/>
</dbReference>
<dbReference type="Gene3D" id="3.10.20.810">
    <property type="entry name" value="Phosphoribosyl-AMP cyclohydrolase"/>
    <property type="match status" value="1"/>
</dbReference>
<dbReference type="InterPro" id="IPR002496">
    <property type="entry name" value="PRib_AMP_CycHydrolase_dom"/>
</dbReference>
<dbReference type="InterPro" id="IPR038019">
    <property type="entry name" value="PRib_AMP_CycHydrolase_sf"/>
</dbReference>
<dbReference type="PANTHER" id="PTHR42945">
    <property type="entry name" value="HISTIDINE BIOSYNTHESIS BIFUNCTIONAL PROTEIN"/>
    <property type="match status" value="1"/>
</dbReference>
<dbReference type="PANTHER" id="PTHR42945:SF1">
    <property type="entry name" value="HISTIDINE BIOSYNTHESIS BIFUNCTIONAL PROTEIN HIS7"/>
    <property type="match status" value="1"/>
</dbReference>
<dbReference type="Pfam" id="PF01502">
    <property type="entry name" value="PRA-CH"/>
    <property type="match status" value="1"/>
</dbReference>
<dbReference type="SUPFAM" id="SSF141734">
    <property type="entry name" value="HisI-like"/>
    <property type="match status" value="1"/>
</dbReference>
<sequence>MVGNMNREALFKTLTTGYLHFWSLSRKKLWLKGETSGNFQIIEEFKVDCDADAVLFKVTSLGPICHTGNYTCFYRSYDELVNSKS</sequence>
<feature type="chain" id="PRO_0000136514" description="Phosphoribosyl-AMP cyclohydrolase">
    <location>
        <begin position="1"/>
        <end position="85"/>
    </location>
</feature>
<feature type="binding site" evidence="1">
    <location>
        <position position="48"/>
    </location>
    <ligand>
        <name>Mg(2+)</name>
        <dbReference type="ChEBI" id="CHEBI:18420"/>
    </ligand>
</feature>
<feature type="binding site" evidence="1">
    <location>
        <position position="49"/>
    </location>
    <ligand>
        <name>Zn(2+)</name>
        <dbReference type="ChEBI" id="CHEBI:29105"/>
        <note>ligand shared between dimeric partners</note>
    </ligand>
</feature>
<feature type="binding site" evidence="1">
    <location>
        <position position="50"/>
    </location>
    <ligand>
        <name>Mg(2+)</name>
        <dbReference type="ChEBI" id="CHEBI:18420"/>
    </ligand>
</feature>
<feature type="binding site" evidence="1">
    <location>
        <position position="52"/>
    </location>
    <ligand>
        <name>Mg(2+)</name>
        <dbReference type="ChEBI" id="CHEBI:18420"/>
    </ligand>
</feature>
<feature type="binding site" evidence="1">
    <location>
        <position position="65"/>
    </location>
    <ligand>
        <name>Zn(2+)</name>
        <dbReference type="ChEBI" id="CHEBI:29105"/>
        <note>ligand shared between dimeric partners</note>
    </ligand>
</feature>
<feature type="binding site" evidence="1">
    <location>
        <position position="72"/>
    </location>
    <ligand>
        <name>Zn(2+)</name>
        <dbReference type="ChEBI" id="CHEBI:29105"/>
        <note>ligand shared between dimeric partners</note>
    </ligand>
</feature>
<proteinExistence type="inferred from homology"/>
<name>HIS3_SACS2</name>
<comment type="function">
    <text evidence="1">Catalyzes the hydrolysis of the adenine ring of phosphoribosyl-AMP.</text>
</comment>
<comment type="catalytic activity">
    <reaction>
        <text>1-(5-phospho-beta-D-ribosyl)-5'-AMP + H2O = 1-(5-phospho-beta-D-ribosyl)-5-[(5-phospho-beta-D-ribosylamino)methylideneamino]imidazole-4-carboxamide</text>
        <dbReference type="Rhea" id="RHEA:20049"/>
        <dbReference type="ChEBI" id="CHEBI:15377"/>
        <dbReference type="ChEBI" id="CHEBI:58435"/>
        <dbReference type="ChEBI" id="CHEBI:59457"/>
        <dbReference type="EC" id="3.5.4.19"/>
    </reaction>
</comment>
<comment type="cofactor">
    <cofactor evidence="1">
        <name>Mg(2+)</name>
        <dbReference type="ChEBI" id="CHEBI:18420"/>
    </cofactor>
    <text evidence="1">Binds 1 Mg(2+) ion per subunit.</text>
</comment>
<comment type="cofactor">
    <cofactor evidence="1">
        <name>Zn(2+)</name>
        <dbReference type="ChEBI" id="CHEBI:29105"/>
    </cofactor>
    <text evidence="1">Binds 1 zinc ion per subunit.</text>
</comment>
<comment type="pathway">
    <text>Amino-acid biosynthesis; L-histidine biosynthesis; L-histidine from 5-phospho-alpha-D-ribose 1-diphosphate: step 3/9.</text>
</comment>
<comment type="subunit">
    <text evidence="1">Homodimer.</text>
</comment>
<comment type="subcellular location">
    <subcellularLocation>
        <location evidence="1">Cytoplasm</location>
    </subcellularLocation>
</comment>
<comment type="similarity">
    <text evidence="2">Belongs to the PRA-CH family.</text>
</comment>
<reference key="1">
    <citation type="journal article" date="1997" name="J. Bacteriol.">
        <title>Evolutionary analysis of the hisCGABdFDEHI gene cluster from the archaeon Sulfolobus solfataricus P2.</title>
        <authorList>
            <person name="Charlebois R.L."/>
            <person name="Sensen C.W."/>
            <person name="Doolittle W.F."/>
            <person name="Brown J.R."/>
        </authorList>
    </citation>
    <scope>NUCLEOTIDE SEQUENCE [GENOMIC DNA]</scope>
    <source>
        <strain>ATCC 35092 / DSM 1617 / JCM 11322 / P2</strain>
    </source>
</reference>
<reference key="2">
    <citation type="journal article" date="2001" name="Proc. Natl. Acad. Sci. U.S.A.">
        <title>The complete genome of the crenarchaeon Sulfolobus solfataricus P2.</title>
        <authorList>
            <person name="She Q."/>
            <person name="Singh R.K."/>
            <person name="Confalonieri F."/>
            <person name="Zivanovic Y."/>
            <person name="Allard G."/>
            <person name="Awayez M.J."/>
            <person name="Chan-Weiher C.C.-Y."/>
            <person name="Clausen I.G."/>
            <person name="Curtis B.A."/>
            <person name="De Moors A."/>
            <person name="Erauso G."/>
            <person name="Fletcher C."/>
            <person name="Gordon P.M.K."/>
            <person name="Heikamp-de Jong I."/>
            <person name="Jeffries A.C."/>
            <person name="Kozera C.J."/>
            <person name="Medina N."/>
            <person name="Peng X."/>
            <person name="Thi-Ngoc H.P."/>
            <person name="Redder P."/>
            <person name="Schenk M.E."/>
            <person name="Theriault C."/>
            <person name="Tolstrup N."/>
            <person name="Charlebois R.L."/>
            <person name="Doolittle W.F."/>
            <person name="Duguet M."/>
            <person name="Gaasterland T."/>
            <person name="Garrett R.A."/>
            <person name="Ragan M.A."/>
            <person name="Sensen C.W."/>
            <person name="Van der Oost J."/>
        </authorList>
    </citation>
    <scope>NUCLEOTIDE SEQUENCE [LARGE SCALE GENOMIC DNA]</scope>
    <source>
        <strain>ATCC 35092 / DSM 1617 / JCM 11322 / P2</strain>
    </source>
</reference>
<accession>O33778</accession>